<feature type="signal peptide" evidence="1">
    <location>
        <begin position="1"/>
        <end position="21"/>
    </location>
</feature>
<feature type="propeptide" id="PRO_0000262454" evidence="16 17">
    <location>
        <begin position="22"/>
        <end position="53"/>
    </location>
</feature>
<feature type="peptide" id="PRO_0000262455" description="Beta/kappa-theraphotoxin-Cg2a" evidence="3 4">
    <location>
        <begin position="54"/>
        <end position="82"/>
    </location>
</feature>
<feature type="modified residue" description="Isoleucine amide" evidence="3">
    <location>
        <position position="82"/>
    </location>
</feature>
<feature type="disulfide bond" evidence="8 18 19">
    <location>
        <begin position="55"/>
        <end position="69"/>
    </location>
</feature>
<feature type="disulfide bond" evidence="8 18 19">
    <location>
        <begin position="62"/>
        <end position="74"/>
    </location>
</feature>
<feature type="disulfide bond" evidence="8 18 19">
    <location>
        <begin position="68"/>
        <end position="78"/>
    </location>
</feature>
<feature type="mutagenesis site" description="61-fold decrease of binding affinity to Nav1.4/SCN4A." evidence="7">
    <original>W</original>
    <variation>A</variation>
    <location>
        <position position="58"/>
    </location>
</feature>
<feature type="mutagenesis site" description="49-fold decrease of binding affinity to Nav1.4/SCN4A." evidence="7">
    <original>M</original>
    <variation>A</variation>
    <location>
        <position position="59"/>
    </location>
</feature>
<feature type="mutagenesis site" description="375-fold decrease of binding affinity to Nav1.4/SCN4A." evidence="7">
    <original>W</original>
    <variation>A</variation>
    <location>
        <position position="60"/>
    </location>
</feature>
<feature type="mutagenesis site" description="410-fold decrease of binding affinity to Nav1.4/SCN4A." evidence="7">
    <original>R</original>
    <variation>A</variation>
    <location>
        <position position="73"/>
    </location>
</feature>
<feature type="mutagenesis site" description="128-fold decrease of binding affinity to Nav1.4/SCN4A." evidence="7">
    <original>K</original>
    <variation>A</variation>
    <location>
        <position position="75"/>
    </location>
</feature>
<feature type="strand" evidence="20">
    <location>
        <begin position="57"/>
        <end position="60"/>
    </location>
</feature>
<feature type="strand" evidence="21">
    <location>
        <begin position="63"/>
        <end position="65"/>
    </location>
</feature>
<feature type="strand" evidence="22">
    <location>
        <begin position="72"/>
        <end position="80"/>
    </location>
</feature>
<proteinExistence type="evidence at protein level"/>
<name>JZTX5_CHIGU</name>
<accession>Q2PAY4</accession>
<accession>P84629</accession>
<keyword id="KW-0002">3D-structure</keyword>
<keyword id="KW-0027">Amidation</keyword>
<keyword id="KW-0903">Direct protein sequencing</keyword>
<keyword id="KW-1015">Disulfide bond</keyword>
<keyword id="KW-0872">Ion channel impairing toxin</keyword>
<keyword id="KW-0960">Knottin</keyword>
<keyword id="KW-0528">Neurotoxin</keyword>
<keyword id="KW-0632">Potassium channel impairing toxin</keyword>
<keyword id="KW-0964">Secreted</keyword>
<keyword id="KW-0732">Signal</keyword>
<keyword id="KW-0800">Toxin</keyword>
<keyword id="KW-1220">Voltage-gated potassium channel impairing toxin</keyword>
<keyword id="KW-0738">Voltage-gated sodium channel impairing toxin</keyword>
<evidence type="ECO:0000255" key="1"/>
<evidence type="ECO:0000269" key="2">
    <source>
    </source>
</evidence>
<evidence type="ECO:0000269" key="3">
    <source>
    </source>
</evidence>
<evidence type="ECO:0000269" key="4">
    <source>
    </source>
</evidence>
<evidence type="ECO:0000269" key="5">
    <source>
    </source>
</evidence>
<evidence type="ECO:0000269" key="6">
    <source>
    </source>
</evidence>
<evidence type="ECO:0000269" key="7">
    <source>
    </source>
</evidence>
<evidence type="ECO:0000269" key="8">
    <source>
    </source>
</evidence>
<evidence type="ECO:0000303" key="9">
    <source>
    </source>
</evidence>
<evidence type="ECO:0000303" key="10">
    <source>
    </source>
</evidence>
<evidence type="ECO:0000303" key="11">
    <source>
    </source>
</evidence>
<evidence type="ECO:0000303" key="12">
    <source>
    </source>
</evidence>
<evidence type="ECO:0000303" key="13">
    <source>
    </source>
</evidence>
<evidence type="ECO:0000303" key="14">
    <source>
    </source>
</evidence>
<evidence type="ECO:0000305" key="15"/>
<evidence type="ECO:0000305" key="16">
    <source>
    </source>
</evidence>
<evidence type="ECO:0000305" key="17">
    <source>
    </source>
</evidence>
<evidence type="ECO:0000312" key="18">
    <source>
        <dbReference type="PDB" id="6CGW"/>
    </source>
</evidence>
<evidence type="ECO:0000312" key="19">
    <source>
        <dbReference type="PDB" id="6CHC"/>
    </source>
</evidence>
<evidence type="ECO:0007829" key="20">
    <source>
        <dbReference type="PDB" id="6CGW"/>
    </source>
</evidence>
<evidence type="ECO:0007829" key="21">
    <source>
        <dbReference type="PDB" id="6CHC"/>
    </source>
</evidence>
<evidence type="ECO:0007829" key="22">
    <source>
        <dbReference type="PDB" id="6CNU"/>
    </source>
</evidence>
<reference key="1">
    <citation type="journal article" date="2007" name="Toxicon">
        <title>Isolation and characterization of Jingzhaotoxin-V, a novel neurotoxin from the venom of the spider Chilobrachys jingzhao.</title>
        <authorList>
            <person name="Zeng X.Z."/>
            <person name="Deng M."/>
            <person name="Lin Y."/>
            <person name="Yuan C."/>
            <person name="Pi J."/>
            <person name="Liang S.-P."/>
        </authorList>
    </citation>
    <scope>NUCLEOTIDE SEQUENCE [MRNA]</scope>
    <scope>PROTEIN SEQUENCE OF 54-82</scope>
    <scope>FUNCTION</scope>
    <scope>SUBCELLULAR LOCATION</scope>
    <scope>MASS SPECTROMETRY</scope>
    <scope>AMIDATION AT ILE-82</scope>
    <source>
        <tissue>Venom</tissue>
        <tissue>Venom gland</tissue>
    </source>
</reference>
<reference key="2">
    <citation type="journal article" date="2007" name="Proteomics">
        <title>Proteomic and peptidomic analysis of the venom from Chinese tarantula Chilobrachys jingzhao.</title>
        <authorList>
            <person name="Liao Z."/>
            <person name="Cao J."/>
            <person name="Li S."/>
            <person name="Yan X."/>
            <person name="Hu W."/>
            <person name="He Q."/>
            <person name="Chen J."/>
            <person name="Tang J."/>
            <person name="Xie J."/>
            <person name="Liang S."/>
        </authorList>
    </citation>
    <scope>PROTEIN SEQUENCE OF 54-82</scope>
    <scope>IDENTIFICATION BY MASS SPECTROMETRY</scope>
    <source>
        <tissue>Venom</tissue>
    </source>
</reference>
<reference key="3">
    <citation type="journal article" date="2010" name="Sheng Li Xue Bao">
        <title>Inhibition of Jingzhaotoxin-V on Kv4.3 channel.</title>
        <authorList>
            <person name="Cai L.-J."/>
            <person name="Xu D.-H."/>
            <person name="Luo J."/>
            <person name="Chen R.-Z."/>
            <person name="Chi Y.-P."/>
            <person name="Zeng X.Z."/>
            <person name="Wang X.-C."/>
            <person name="Liang S.-P."/>
        </authorList>
    </citation>
    <scope>SYNTHESIS OF 54-82</scope>
    <scope>FUNCTION</scope>
</reference>
<reference key="4">
    <citation type="journal article" date="2007" name="Biochem. Biophys. Res. Commun.">
        <title>Effects and mechanism of Chinese tarantula toxins on the Kv2.1 potassium channels.</title>
        <authorList>
            <person name="Yuan C."/>
            <person name="Yang S."/>
            <person name="Liao Z."/>
            <person name="Liang S."/>
        </authorList>
    </citation>
    <scope>FUNCTION</scope>
</reference>
<reference key="5">
    <citation type="journal article" date="2008" name="Cell. Mol. Life Sci.">
        <title>Molecular diversity and evolution of cystine knot toxins of the tarantula Chilobrachys jingzhao.</title>
        <authorList>
            <person name="Chen J."/>
            <person name="Deng M."/>
            <person name="He Q."/>
            <person name="Meng E."/>
            <person name="Jiang L."/>
            <person name="Liao Z."/>
            <person name="Rong M."/>
            <person name="Liang S."/>
        </authorList>
    </citation>
    <scope>FUNCTION</scope>
    <source>
        <tissue>Venom gland</tissue>
    </source>
</reference>
<reference key="6">
    <citation type="journal article" date="2014" name="Toxins">
        <title>Molecular surface of JZTX-V (beta-Theraphotoxin-Cj2a) interacting with voltage-gated sodium channel subtype NaV1.4.</title>
        <authorList>
            <person name="Luo J."/>
            <person name="Zhang Y."/>
            <person name="Gong M."/>
            <person name="Lu S."/>
            <person name="Ma Y."/>
            <person name="Zeng X."/>
            <person name="Liang S."/>
        </authorList>
    </citation>
    <scope>FUNCTION</scope>
    <scope>MUTAGENESIS OF TRP-58; MET-59; TRP-60; ARG-73 AND LYS-75</scope>
</reference>
<reference key="7">
    <citation type="journal article" date="2018" name="PLoS ONE">
        <title>Pharmacological characterization of potent and selective NaV1.7 inhibitors engineered from Chilobrachys jingzhao tarantula venom peptide JzTx-V.</title>
        <authorList>
            <person name="Moyer B.D."/>
            <person name="Murray J.K."/>
            <person name="Ligutti J."/>
            <person name="Andrews K."/>
            <person name="Favreau P."/>
            <person name="Jordan J.B."/>
            <person name="Lee J.H."/>
            <person name="Liu D."/>
            <person name="Long J."/>
            <person name="Sham K."/>
            <person name="Shi L."/>
            <person name="Stoecklin R."/>
            <person name="Wu B."/>
            <person name="Yin R."/>
            <person name="Yu V."/>
            <person name="Zou A."/>
            <person name="Biswas K."/>
            <person name="Miranda L.P."/>
        </authorList>
    </citation>
    <scope>STRUCTURE BY NMR OF 54-82 OF MUTANTS PRA-[NLE6]JZTX-V(1-29) AND AM-8145</scope>
    <scope>DISULFIDE BOND</scope>
    <scope>FUNCTION</scope>
    <scope>FUNCTION OF ANALOGS AM-8145; AM-0422 AND AM-8394</scope>
    <scope>SYNTHESIS OF 54-82</scope>
    <source>
        <tissue>Venom</tissue>
    </source>
</reference>
<comment type="function">
    <text evidence="2 3 5 6 8">This gating-modifier toxin shows an important inhibitory activity on sodium channels (PubMed:29723257). It is very active on Nav1.7/SCN9A (IC(50)~0.6 nM), and also shows activity on Nav1.3/SCN3A (IC(50)=292 nM), Nav1.4/SCN4A (IC(50)=2.2-159 nM), and Nav1.5/SCN5A (IC(50)=2.3-2.9 uM) (PubMed:25055801, PubMed:29723257). It has also been shown to inhibit tetrodotoxin (TTX)-resistant (IC(50)=27.6 nM) and TTX-sensitive (IC(50)=30.2 nM) sodium channels in rat dorsal root ganglion neurons (PubMed:17157888). Lower inhibitory activity has also been shown on potassium channels: Kv4.2/KCND2 (IC(50)=604.2 nM), Kv4.3/KCND3 (IC(50)=425.1 nM), and Kv2.1/KCNB1 (IC(50)=14.3 uM) (PubMed:17150181, PubMed:17157888, PubMed:20571743). It binds to phospholipid membranes. Like its analog AM-8145, it may act by interacting only with the second voltage-sensor domain of Nav1.7/SCN9A (Probable).</text>
</comment>
<comment type="subcellular location">
    <subcellularLocation>
        <location evidence="3">Secreted</location>
    </subcellularLocation>
</comment>
<comment type="tissue specificity">
    <text evidence="16">Expressed by the venom gland.</text>
</comment>
<comment type="domain">
    <text evidence="8">The presence of a 'disulfide through disulfide knot' structurally defines this protein as a knottin.</text>
</comment>
<comment type="mass spectrometry" mass="3605.73" error="0.3" method="MALDI" evidence="3"/>
<comment type="miscellaneous">
    <text evidence="2 3">Negative results: does not inhibit Kv1.2/KCNA2, Kv1.3/KCNA3, and Kv1.4/KCNA4 channels (PubMed:17157888). Shows an extremely weak inhibition on Kv4.1/KCND1 (PubMed:17150181).</text>
</comment>
<comment type="miscellaneous">
    <text evidence="8">The analog AM-8145 has a propargylglycine (Pra) N-terminally inserted, a norleucine (Nle) that replaces Met-59 (Met-6), and a Glu instead of Ile-81 (Ile-28). This analog potently blocks Nav1.7/SCN9A (IC(50)=0.5 nM) by interacting only with its second voltage-sensor domain (PubMed:29723257). It is 30- to 120-fold less active on TTX-sensitive sodium channels, and shows no or very low activity on TTX-resistant sodium channels (PubMed:29723257).</text>
</comment>
<comment type="miscellaneous">
    <text evidence="8">The analog AM-0422 has a beta-cyanoalanine (CyA) N-terminally inserted, a norleucine (Nle) that replaces Met-59 (Met-6), a propargylglycine (Pra) instead of Glu-70 (Glu-17), and a Glu instead of Ile-81 (Ile-28). This analog potently blocks Nav1.7/SCN9A (IC(50)=0.8 nM) (PubMed:29723257). It also potently blocks TTX-sensitive sodium channels in mouse and rat DRG neurons (IC(50)=9-27 nM) (PubMed:29723257). It also specifically blocks capsaicin-induced rat DRG neuron action potential firing (PubMed:29723257). In addition, it specifically blocks mechanically-induced C-fiber action potential firing from afferent nerve terminals (PubMed:29723257).</text>
</comment>
<comment type="miscellaneous">
    <text evidence="8">The analog AM-8394 has a propargylglycine (Pra) N-terminally inserted, a norleucine (Nle) that replaces Met-59 (Met-6), and Glu residues instead of Leu-72 (Leu-19) and Ile-81 (Ile-28) (PubMed:29723257). This analog show a weak inhibitory activity on Nav1.7/SCN9A (IC(50)&gt;1 uM) (PubMed:29723257). It does not show activity on TTX-sensitive sodium channels in mouse and rat DRG neurons (PubMed:29723257). As a consequence, it can be used as a negative control peptide.</text>
</comment>
<comment type="similarity">
    <text evidence="15">Belongs to the neurotoxin 30 (phrixotoxin) family.</text>
</comment>
<organism>
    <name type="scientific">Chilobrachys guangxiensis</name>
    <name type="common">Chinese earth tiger tarantula</name>
    <name type="synonym">Chilobrachys jingzhao</name>
    <dbReference type="NCBI Taxonomy" id="278060"/>
    <lineage>
        <taxon>Eukaryota</taxon>
        <taxon>Metazoa</taxon>
        <taxon>Ecdysozoa</taxon>
        <taxon>Arthropoda</taxon>
        <taxon>Chelicerata</taxon>
        <taxon>Arachnida</taxon>
        <taxon>Araneae</taxon>
        <taxon>Mygalomorphae</taxon>
        <taxon>Theraphosidae</taxon>
        <taxon>Chilobrachys</taxon>
    </lineage>
</organism>
<protein>
    <recommendedName>
        <fullName evidence="14">Beta/kappa-theraphotoxin-Cg2a</fullName>
        <shortName evidence="14">Beta/kappa-TRTX-Cg2a</shortName>
    </recommendedName>
    <alternativeName>
        <fullName evidence="13">Beta-theraphotoxin-Cj2a</fullName>
    </alternativeName>
    <alternativeName>
        <fullName evidence="15">Jingzhaotoxin-5</fullName>
    </alternativeName>
    <alternativeName>
        <fullName evidence="9 10 12">Jingzhaotoxin-V</fullName>
        <shortName evidence="9 10 11 12">JZTX-V</shortName>
    </alternativeName>
    <alternativeName>
        <fullName>Peptide F8-15.73</fullName>
    </alternativeName>
</protein>
<sequence length="83" mass="9586">MKASVFAVILGLVVLCACSFAEDEQDQFVSPNELLKSMFVESRHEFTPEVEGRYCQKWMWTCDSKRACCEGLRCKLWCRKIIG</sequence>
<dbReference type="EMBL" id="AM072411">
    <property type="protein sequence ID" value="CAJ21615.1"/>
    <property type="molecule type" value="mRNA"/>
</dbReference>
<dbReference type="PDB" id="6CGW">
    <property type="method" value="NMR"/>
    <property type="chains" value="A=54-82"/>
</dbReference>
<dbReference type="PDB" id="6CHC">
    <property type="method" value="NMR"/>
    <property type="chains" value="A=53-82"/>
</dbReference>
<dbReference type="PDB" id="6CNU">
    <property type="method" value="X-ray"/>
    <property type="resolution" value="1.05 A"/>
    <property type="chains" value="B=55-82"/>
</dbReference>
<dbReference type="PDBsum" id="6CGW"/>
<dbReference type="PDBsum" id="6CHC"/>
<dbReference type="PDBsum" id="6CNU"/>
<dbReference type="SMR" id="Q2PAY4"/>
<dbReference type="ArachnoServer" id="AS000047">
    <property type="toxin name" value="beta/kappa-theraphotoxin-Cg2a"/>
</dbReference>
<dbReference type="GO" id="GO:0005576">
    <property type="term" value="C:extracellular region"/>
    <property type="evidence" value="ECO:0007669"/>
    <property type="project" value="UniProtKB-SubCell"/>
</dbReference>
<dbReference type="GO" id="GO:0015459">
    <property type="term" value="F:potassium channel regulator activity"/>
    <property type="evidence" value="ECO:0007669"/>
    <property type="project" value="UniProtKB-KW"/>
</dbReference>
<dbReference type="GO" id="GO:0017080">
    <property type="term" value="F:sodium channel regulator activity"/>
    <property type="evidence" value="ECO:0007669"/>
    <property type="project" value="UniProtKB-KW"/>
</dbReference>
<dbReference type="GO" id="GO:0090729">
    <property type="term" value="F:toxin activity"/>
    <property type="evidence" value="ECO:0007669"/>
    <property type="project" value="UniProtKB-KW"/>
</dbReference>
<dbReference type="SUPFAM" id="SSF57059">
    <property type="entry name" value="omega toxin-like"/>
    <property type="match status" value="1"/>
</dbReference>